<protein>
    <recommendedName>
        <fullName>Glucagon-1</fullName>
    </recommendedName>
    <alternativeName>
        <fullName>Glucagon I</fullName>
    </alternativeName>
    <component>
        <recommendedName>
            <fullName>Glucagon</fullName>
        </recommendedName>
    </component>
    <component>
        <recommendedName>
            <fullName>Glucagon-like peptide 1A</fullName>
            <shortName>GLP-1A</shortName>
        </recommendedName>
    </component>
    <component>
        <recommendedName>
            <fullName>Glucagon-like peptide 1B</fullName>
            <shortName>GLP-1B</shortName>
        </recommendedName>
    </component>
    <component>
        <recommendedName>
            <fullName>Glucagon-like peptide 1C</fullName>
            <shortName>GLP-1C</shortName>
        </recommendedName>
    </component>
    <component>
        <recommendedName>
            <fullName>Glucagon-like peptide 2</fullName>
            <shortName>GLP-2</shortName>
        </recommendedName>
    </component>
</protein>
<dbReference type="EMBL" id="AF004432">
    <property type="protein sequence ID" value="AAB65660.1"/>
    <property type="molecule type" value="mRNA"/>
</dbReference>
<dbReference type="RefSeq" id="NP_001079142.1">
    <molecule id="O42143-1"/>
    <property type="nucleotide sequence ID" value="NM_001085673.1"/>
</dbReference>
<dbReference type="SMR" id="O42143"/>
<dbReference type="GeneID" id="373686"/>
<dbReference type="KEGG" id="xla:373686"/>
<dbReference type="AGR" id="Xenbase:XB-GENE-1000161"/>
<dbReference type="CTD" id="373686"/>
<dbReference type="Xenbase" id="XB-GENE-1000161">
    <property type="gene designation" value="gcg.L"/>
</dbReference>
<dbReference type="OrthoDB" id="9904258at2759"/>
<dbReference type="Proteomes" id="UP000186698">
    <property type="component" value="Chromosome 9_10L"/>
</dbReference>
<dbReference type="Bgee" id="373686">
    <property type="expression patterns" value="Expressed in pancreas and 6 other cell types or tissues"/>
</dbReference>
<dbReference type="GO" id="GO:0005615">
    <property type="term" value="C:extracellular space"/>
    <property type="evidence" value="ECO:0000318"/>
    <property type="project" value="GO_Central"/>
</dbReference>
<dbReference type="GO" id="GO:0031769">
    <property type="term" value="F:glucagon receptor binding"/>
    <property type="evidence" value="ECO:0000318"/>
    <property type="project" value="GO_Central"/>
</dbReference>
<dbReference type="GO" id="GO:0005179">
    <property type="term" value="F:hormone activity"/>
    <property type="evidence" value="ECO:0000318"/>
    <property type="project" value="GO_Central"/>
</dbReference>
<dbReference type="GO" id="GO:0007188">
    <property type="term" value="P:adenylate cyclase-modulating G protein-coupled receptor signaling pathway"/>
    <property type="evidence" value="ECO:0000318"/>
    <property type="project" value="GO_Central"/>
</dbReference>
<dbReference type="GO" id="GO:0043066">
    <property type="term" value="P:negative regulation of apoptotic process"/>
    <property type="evidence" value="ECO:0000318"/>
    <property type="project" value="GO_Central"/>
</dbReference>
<dbReference type="GO" id="GO:0035774">
    <property type="term" value="P:positive regulation of insulin secretion involved in cellular response to glucose stimulus"/>
    <property type="evidence" value="ECO:0000318"/>
    <property type="project" value="GO_Central"/>
</dbReference>
<dbReference type="GO" id="GO:0010737">
    <property type="term" value="P:protein kinase A signaling"/>
    <property type="evidence" value="ECO:0000318"/>
    <property type="project" value="GO_Central"/>
</dbReference>
<dbReference type="Gene3D" id="6.10.250.590">
    <property type="match status" value="5"/>
</dbReference>
<dbReference type="InterPro" id="IPR015550">
    <property type="entry name" value="Glucagon"/>
</dbReference>
<dbReference type="InterPro" id="IPR000532">
    <property type="entry name" value="Glucagon_GIP_secretin_VIP"/>
</dbReference>
<dbReference type="PANTHER" id="PTHR11418">
    <property type="entry name" value="GLUCAGON"/>
    <property type="match status" value="1"/>
</dbReference>
<dbReference type="PANTHER" id="PTHR11418:SF0">
    <property type="entry name" value="PRO-GLUCAGON"/>
    <property type="match status" value="1"/>
</dbReference>
<dbReference type="Pfam" id="PF00123">
    <property type="entry name" value="Hormone_2"/>
    <property type="match status" value="5"/>
</dbReference>
<dbReference type="PIRSF" id="PIRSF037818">
    <property type="entry name" value="Glucagon"/>
    <property type="match status" value="1"/>
</dbReference>
<dbReference type="PRINTS" id="PR00275">
    <property type="entry name" value="GLUCAGON"/>
</dbReference>
<dbReference type="SMART" id="SM00070">
    <property type="entry name" value="GLUCA"/>
    <property type="match status" value="5"/>
</dbReference>
<dbReference type="PROSITE" id="PS00260">
    <property type="entry name" value="GLUCAGON"/>
    <property type="match status" value="5"/>
</dbReference>
<name>GLUC1_XENLA</name>
<evidence type="ECO:0000255" key="1"/>
<evidence type="ECO:0000256" key="2">
    <source>
        <dbReference type="SAM" id="MobiDB-lite"/>
    </source>
</evidence>
<evidence type="ECO:0000305" key="3"/>
<reference evidence="3" key="1">
    <citation type="journal article" date="1997" name="Proc. Natl. Acad. Sci. U.S.A.">
        <title>The Xenopus proglucagon gene encodes novel GLP-1-like peptides with insulinotropic properties.</title>
        <authorList>
            <person name="Irwin D.M."/>
            <person name="Satkunarajah M."/>
            <person name="Wen Y."/>
            <person name="Brubaker P.L."/>
            <person name="Pederson R.A."/>
            <person name="Wheeler M.B."/>
        </authorList>
    </citation>
    <scope>NUCLEOTIDE SEQUENCE [MRNA]</scope>
    <scope>ALTERNATIVE SPLICING</scope>
    <source>
        <tissue>Pancreas</tissue>
    </source>
</reference>
<gene>
    <name type="primary">gcg1</name>
</gene>
<feature type="signal peptide" evidence="1">
    <location>
        <begin position="1"/>
        <end position="20"/>
    </location>
</feature>
<feature type="propeptide" id="PRO_0000011390">
    <location>
        <begin position="21"/>
        <end position="50"/>
    </location>
</feature>
<feature type="peptide" id="PRO_0000011391" description="Glucagon">
    <location>
        <begin position="53"/>
        <end position="81"/>
    </location>
</feature>
<feature type="propeptide" id="PRO_0000011392">
    <location>
        <begin position="84"/>
        <end position="95"/>
    </location>
</feature>
<feature type="peptide" id="PRO_0000011393" description="Glucagon-like peptide 1A">
    <location>
        <begin position="97"/>
        <end position="133"/>
    </location>
</feature>
<feature type="propeptide" id="PRO_0000011394">
    <location>
        <begin position="136"/>
        <end position="140"/>
    </location>
</feature>
<feature type="peptide" id="PRO_0000011395" description="Glucagon-like peptide 1B">
    <location>
        <begin position="142"/>
        <end position="172"/>
    </location>
</feature>
<feature type="propeptide" id="PRO_0000011396">
    <location>
        <begin position="175"/>
        <end position="178"/>
    </location>
</feature>
<feature type="peptide" id="PRO_0000011397" description="Glucagon-like peptide 1C">
    <location>
        <begin position="180"/>
        <end position="210"/>
    </location>
</feature>
<feature type="propeptide" id="PRO_0000011398">
    <location>
        <begin position="213"/>
        <end position="224"/>
    </location>
</feature>
<feature type="peptide" id="PRO_0000011399" description="Glucagon-like peptide 2">
    <location>
        <begin position="227"/>
        <end position="259"/>
    </location>
</feature>
<feature type="propeptide" id="PRO_0000011400">
    <location>
        <begin position="261"/>
        <end position="266"/>
    </location>
</feature>
<feature type="region of interest" description="Disordered" evidence="2">
    <location>
        <begin position="23"/>
        <end position="44"/>
    </location>
</feature>
<feature type="compositionally biased region" description="Polar residues" evidence="2">
    <location>
        <begin position="23"/>
        <end position="32"/>
    </location>
</feature>
<feature type="splice variant" id="VSP_001755" description="In isoform 2." evidence="3">
    <location>
        <begin position="214"/>
        <end position="261"/>
    </location>
</feature>
<organism>
    <name type="scientific">Xenopus laevis</name>
    <name type="common">African clawed frog</name>
    <dbReference type="NCBI Taxonomy" id="8355"/>
    <lineage>
        <taxon>Eukaryota</taxon>
        <taxon>Metazoa</taxon>
        <taxon>Chordata</taxon>
        <taxon>Craniata</taxon>
        <taxon>Vertebrata</taxon>
        <taxon>Euteleostomi</taxon>
        <taxon>Amphibia</taxon>
        <taxon>Batrachia</taxon>
        <taxon>Anura</taxon>
        <taxon>Pipoidea</taxon>
        <taxon>Pipidae</taxon>
        <taxon>Xenopodinae</taxon>
        <taxon>Xenopus</taxon>
        <taxon>Xenopus</taxon>
    </lineage>
</organism>
<proteinExistence type="evidence at transcript level"/>
<keyword id="KW-0025">Alternative splicing</keyword>
<keyword id="KW-0165">Cleavage on pair of basic residues</keyword>
<keyword id="KW-0372">Hormone</keyword>
<keyword id="KW-1185">Reference proteome</keyword>
<keyword id="KW-0964">Secreted</keyword>
<keyword id="KW-0732">Signal</keyword>
<comment type="function">
    <text>Promotes hydrolysis of glycogen and lipids, and raises the blood sugar level.</text>
</comment>
<comment type="subcellular location">
    <subcellularLocation>
        <location>Secreted</location>
    </subcellularLocation>
</comment>
<comment type="alternative products">
    <event type="alternative splicing"/>
    <isoform>
        <id>O42143-1</id>
        <name>1</name>
        <sequence type="displayed"/>
    </isoform>
    <isoform>
        <id>O42143-2</id>
        <name>2</name>
        <sequence type="described" ref="VSP_001755"/>
    </isoform>
</comment>
<comment type="similarity">
    <text evidence="3">Belongs to the glucagon family.</text>
</comment>
<sequence length="266" mass="30951">MKSTCYMIGILLMILQNTYQSPVPETDANSRSVKAARNEAVDDSEQLKEVKRHSQGTFTSDYSKYLDSRRAQDFVQWLMNTKRSGELSRRNADYERHAEGTFTSDVTQQLDEKAAKEFIDWLINGGPSKEIISRRNAEFERHAEGTYTNDVTEYLEEKAAKEFIEWLIKGKPKKIRYSRHAEGTFTNDMTNYLEEKAAKEFVGWLIKGRPKRNFSEVHSVEEMDRRHADGSFTNDINKVLDIIAAQEFLDWVINTQETERDLLEEQ</sequence>
<accession>O42143</accession>